<comment type="function">
    <text evidence="1">Catalyzes the phosphorylation of pantothenate (Pan), the first step in CoA biosynthesis.</text>
</comment>
<comment type="catalytic activity">
    <reaction evidence="1">
        <text>(R)-pantothenate + ATP = (R)-4'-phosphopantothenate + ADP + H(+)</text>
        <dbReference type="Rhea" id="RHEA:16373"/>
        <dbReference type="ChEBI" id="CHEBI:10986"/>
        <dbReference type="ChEBI" id="CHEBI:15378"/>
        <dbReference type="ChEBI" id="CHEBI:29032"/>
        <dbReference type="ChEBI" id="CHEBI:30616"/>
        <dbReference type="ChEBI" id="CHEBI:456216"/>
        <dbReference type="EC" id="2.7.1.33"/>
    </reaction>
</comment>
<comment type="cofactor">
    <cofactor evidence="1">
        <name>NH4(+)</name>
        <dbReference type="ChEBI" id="CHEBI:28938"/>
    </cofactor>
    <cofactor evidence="1">
        <name>K(+)</name>
        <dbReference type="ChEBI" id="CHEBI:29103"/>
    </cofactor>
    <text evidence="1">A monovalent cation. Ammonium or potassium.</text>
</comment>
<comment type="pathway">
    <text evidence="1">Cofactor biosynthesis; coenzyme A biosynthesis; CoA from (R)-pantothenate: step 1/5.</text>
</comment>
<comment type="subunit">
    <text evidence="1">Homodimer.</text>
</comment>
<comment type="subcellular location">
    <subcellularLocation>
        <location evidence="1">Cytoplasm</location>
    </subcellularLocation>
</comment>
<comment type="similarity">
    <text evidence="1">Belongs to the type III pantothenate kinase family.</text>
</comment>
<name>COAX_BACAH</name>
<gene>
    <name evidence="1" type="primary">coaX</name>
    <name type="ordered locus">BALH_0064</name>
</gene>
<dbReference type="EC" id="2.7.1.33" evidence="1"/>
<dbReference type="EMBL" id="CP000485">
    <property type="protein sequence ID" value="ABK83481.1"/>
    <property type="molecule type" value="Genomic_DNA"/>
</dbReference>
<dbReference type="RefSeq" id="WP_000578367.1">
    <property type="nucleotide sequence ID" value="NC_008600.1"/>
</dbReference>
<dbReference type="SMR" id="A0R8D8"/>
<dbReference type="KEGG" id="btl:BALH_0064"/>
<dbReference type="HOGENOM" id="CLU_066627_1_0_9"/>
<dbReference type="UniPathway" id="UPA00241">
    <property type="reaction ID" value="UER00352"/>
</dbReference>
<dbReference type="GO" id="GO:0005737">
    <property type="term" value="C:cytoplasm"/>
    <property type="evidence" value="ECO:0007669"/>
    <property type="project" value="UniProtKB-SubCell"/>
</dbReference>
<dbReference type="GO" id="GO:0005524">
    <property type="term" value="F:ATP binding"/>
    <property type="evidence" value="ECO:0007669"/>
    <property type="project" value="UniProtKB-UniRule"/>
</dbReference>
<dbReference type="GO" id="GO:0046872">
    <property type="term" value="F:metal ion binding"/>
    <property type="evidence" value="ECO:0007669"/>
    <property type="project" value="UniProtKB-KW"/>
</dbReference>
<dbReference type="GO" id="GO:0004594">
    <property type="term" value="F:pantothenate kinase activity"/>
    <property type="evidence" value="ECO:0007669"/>
    <property type="project" value="UniProtKB-UniRule"/>
</dbReference>
<dbReference type="GO" id="GO:0015937">
    <property type="term" value="P:coenzyme A biosynthetic process"/>
    <property type="evidence" value="ECO:0007669"/>
    <property type="project" value="UniProtKB-UniRule"/>
</dbReference>
<dbReference type="CDD" id="cd24015">
    <property type="entry name" value="ASKHA_NBD_PanK-III"/>
    <property type="match status" value="1"/>
</dbReference>
<dbReference type="Gene3D" id="3.30.420.40">
    <property type="match status" value="2"/>
</dbReference>
<dbReference type="HAMAP" id="MF_01274">
    <property type="entry name" value="Pantothen_kinase_3"/>
    <property type="match status" value="1"/>
</dbReference>
<dbReference type="InterPro" id="IPR043129">
    <property type="entry name" value="ATPase_NBD"/>
</dbReference>
<dbReference type="InterPro" id="IPR004619">
    <property type="entry name" value="Type_III_PanK"/>
</dbReference>
<dbReference type="NCBIfam" id="TIGR00671">
    <property type="entry name" value="baf"/>
    <property type="match status" value="1"/>
</dbReference>
<dbReference type="NCBIfam" id="NF009843">
    <property type="entry name" value="PRK13318.1-1"/>
    <property type="match status" value="1"/>
</dbReference>
<dbReference type="NCBIfam" id="NF009847">
    <property type="entry name" value="PRK13318.1-5"/>
    <property type="match status" value="1"/>
</dbReference>
<dbReference type="NCBIfam" id="NF009848">
    <property type="entry name" value="PRK13318.1-6"/>
    <property type="match status" value="1"/>
</dbReference>
<dbReference type="NCBIfam" id="NF009855">
    <property type="entry name" value="PRK13321.1"/>
    <property type="match status" value="1"/>
</dbReference>
<dbReference type="PANTHER" id="PTHR34265">
    <property type="entry name" value="TYPE III PANTOTHENATE KINASE"/>
    <property type="match status" value="1"/>
</dbReference>
<dbReference type="PANTHER" id="PTHR34265:SF1">
    <property type="entry name" value="TYPE III PANTOTHENATE KINASE"/>
    <property type="match status" value="1"/>
</dbReference>
<dbReference type="Pfam" id="PF03309">
    <property type="entry name" value="Pan_kinase"/>
    <property type="match status" value="1"/>
</dbReference>
<dbReference type="SUPFAM" id="SSF53067">
    <property type="entry name" value="Actin-like ATPase domain"/>
    <property type="match status" value="2"/>
</dbReference>
<evidence type="ECO:0000255" key="1">
    <source>
        <dbReference type="HAMAP-Rule" id="MF_01274"/>
    </source>
</evidence>
<proteinExistence type="inferred from homology"/>
<feature type="chain" id="PRO_1000054359" description="Type III pantothenate kinase">
    <location>
        <begin position="1"/>
        <end position="262"/>
    </location>
</feature>
<feature type="active site" description="Proton acceptor" evidence="1">
    <location>
        <position position="109"/>
    </location>
</feature>
<feature type="binding site" evidence="1">
    <location>
        <begin position="6"/>
        <end position="13"/>
    </location>
    <ligand>
        <name>ATP</name>
        <dbReference type="ChEBI" id="CHEBI:30616"/>
    </ligand>
</feature>
<feature type="binding site" evidence="1">
    <location>
        <position position="100"/>
    </location>
    <ligand>
        <name>substrate</name>
    </ligand>
</feature>
<feature type="binding site" evidence="1">
    <location>
        <begin position="107"/>
        <end position="110"/>
    </location>
    <ligand>
        <name>substrate</name>
    </ligand>
</feature>
<feature type="binding site" evidence="1">
    <location>
        <position position="129"/>
    </location>
    <ligand>
        <name>K(+)</name>
        <dbReference type="ChEBI" id="CHEBI:29103"/>
    </ligand>
</feature>
<feature type="binding site" evidence="1">
    <location>
        <position position="132"/>
    </location>
    <ligand>
        <name>ATP</name>
        <dbReference type="ChEBI" id="CHEBI:30616"/>
    </ligand>
</feature>
<feature type="binding site" evidence="1">
    <location>
        <position position="184"/>
    </location>
    <ligand>
        <name>substrate</name>
    </ligand>
</feature>
<sequence length="262" mass="29094">MIFVLDVGNTNAVLGVFEEGELRQHWRMETDRHKTEDEYGMLVKQLLEHEGLSFEDVKGIIVSSVVPPIMFALERMCEKYFKIKPLVVGPGIKTGLNIKYENPREVGADRIVNAVAGIHLYGSPLIIVDFGTATTYCYINEEKHYMGGVITPGIMISAEALYSRAAKLPRIEITKPSSVVGKNTVSAMQSGILYGYVGQVEGIVKRMKEEAKQEPKVIATGGLAKLISEESNVIDVVDPFLTLKGLYMLYERNANLQHEKGE</sequence>
<keyword id="KW-0067">ATP-binding</keyword>
<keyword id="KW-0173">Coenzyme A biosynthesis</keyword>
<keyword id="KW-0963">Cytoplasm</keyword>
<keyword id="KW-0418">Kinase</keyword>
<keyword id="KW-0479">Metal-binding</keyword>
<keyword id="KW-0547">Nucleotide-binding</keyword>
<keyword id="KW-0630">Potassium</keyword>
<keyword id="KW-0808">Transferase</keyword>
<organism>
    <name type="scientific">Bacillus thuringiensis (strain Al Hakam)</name>
    <dbReference type="NCBI Taxonomy" id="412694"/>
    <lineage>
        <taxon>Bacteria</taxon>
        <taxon>Bacillati</taxon>
        <taxon>Bacillota</taxon>
        <taxon>Bacilli</taxon>
        <taxon>Bacillales</taxon>
        <taxon>Bacillaceae</taxon>
        <taxon>Bacillus</taxon>
        <taxon>Bacillus cereus group</taxon>
    </lineage>
</organism>
<reference key="1">
    <citation type="journal article" date="2007" name="J. Bacteriol.">
        <title>The complete genome sequence of Bacillus thuringiensis Al Hakam.</title>
        <authorList>
            <person name="Challacombe J.F."/>
            <person name="Altherr M.R."/>
            <person name="Xie G."/>
            <person name="Bhotika S.S."/>
            <person name="Brown N."/>
            <person name="Bruce D."/>
            <person name="Campbell C.S."/>
            <person name="Campbell M.L."/>
            <person name="Chen J."/>
            <person name="Chertkov O."/>
            <person name="Cleland C."/>
            <person name="Dimitrijevic M."/>
            <person name="Doggett N.A."/>
            <person name="Fawcett J.J."/>
            <person name="Glavina T."/>
            <person name="Goodwin L.A."/>
            <person name="Green L.D."/>
            <person name="Han C.S."/>
            <person name="Hill K.K."/>
            <person name="Hitchcock P."/>
            <person name="Jackson P.J."/>
            <person name="Keim P."/>
            <person name="Kewalramani A.R."/>
            <person name="Longmire J."/>
            <person name="Lucas S."/>
            <person name="Malfatti S."/>
            <person name="Martinez D."/>
            <person name="McMurry K."/>
            <person name="Meincke L.J."/>
            <person name="Misra M."/>
            <person name="Moseman B.L."/>
            <person name="Mundt M."/>
            <person name="Munk A.C."/>
            <person name="Okinaka R.T."/>
            <person name="Parson-Quintana B."/>
            <person name="Reilly L.P."/>
            <person name="Richardson P."/>
            <person name="Robinson D.L."/>
            <person name="Saunders E."/>
            <person name="Tapia R."/>
            <person name="Tesmer J.G."/>
            <person name="Thayer N."/>
            <person name="Thompson L.S."/>
            <person name="Tice H."/>
            <person name="Ticknor L.O."/>
            <person name="Wills P.L."/>
            <person name="Gilna P."/>
            <person name="Brettin T.S."/>
        </authorList>
    </citation>
    <scope>NUCLEOTIDE SEQUENCE [LARGE SCALE GENOMIC DNA]</scope>
    <source>
        <strain>Al Hakam</strain>
    </source>
</reference>
<accession>A0R8D8</accession>
<protein>
    <recommendedName>
        <fullName evidence="1">Type III pantothenate kinase</fullName>
        <ecNumber evidence="1">2.7.1.33</ecNumber>
    </recommendedName>
    <alternativeName>
        <fullName evidence="1">PanK-III</fullName>
    </alternativeName>
    <alternativeName>
        <fullName evidence="1">Pantothenic acid kinase</fullName>
    </alternativeName>
</protein>